<feature type="chain" id="PRO_1000140245" description="Type III pantothenate kinase">
    <location>
        <begin position="1"/>
        <end position="254"/>
    </location>
</feature>
<feature type="active site" description="Proton acceptor" evidence="1">
    <location>
        <position position="109"/>
    </location>
</feature>
<feature type="binding site" evidence="1">
    <location>
        <begin position="6"/>
        <end position="13"/>
    </location>
    <ligand>
        <name>ATP</name>
        <dbReference type="ChEBI" id="CHEBI:30616"/>
    </ligand>
</feature>
<feature type="binding site" evidence="1">
    <location>
        <position position="100"/>
    </location>
    <ligand>
        <name>substrate</name>
    </ligand>
</feature>
<feature type="binding site" evidence="1">
    <location>
        <begin position="107"/>
        <end position="110"/>
    </location>
    <ligand>
        <name>substrate</name>
    </ligand>
</feature>
<feature type="binding site" evidence="1">
    <location>
        <position position="129"/>
    </location>
    <ligand>
        <name>K(+)</name>
        <dbReference type="ChEBI" id="CHEBI:29103"/>
    </ligand>
</feature>
<feature type="binding site" evidence="1">
    <location>
        <position position="132"/>
    </location>
    <ligand>
        <name>ATP</name>
        <dbReference type="ChEBI" id="CHEBI:30616"/>
    </ligand>
</feature>
<feature type="binding site" evidence="1">
    <location>
        <position position="184"/>
    </location>
    <ligand>
        <name>substrate</name>
    </ligand>
</feature>
<gene>
    <name evidence="1" type="primary">coaX</name>
    <name type="ordered locus">Gbem_2319</name>
</gene>
<evidence type="ECO:0000255" key="1">
    <source>
        <dbReference type="HAMAP-Rule" id="MF_01274"/>
    </source>
</evidence>
<dbReference type="EC" id="2.7.1.33" evidence="1"/>
<dbReference type="EMBL" id="CP001124">
    <property type="protein sequence ID" value="ACH39331.1"/>
    <property type="molecule type" value="Genomic_DNA"/>
</dbReference>
<dbReference type="RefSeq" id="WP_012530753.1">
    <property type="nucleotide sequence ID" value="NC_011146.1"/>
</dbReference>
<dbReference type="SMR" id="B5EF22"/>
<dbReference type="STRING" id="404380.Gbem_2319"/>
<dbReference type="KEGG" id="gbm:Gbem_2319"/>
<dbReference type="eggNOG" id="COG1521">
    <property type="taxonomic scope" value="Bacteria"/>
</dbReference>
<dbReference type="HOGENOM" id="CLU_066627_1_0_7"/>
<dbReference type="OrthoDB" id="9804707at2"/>
<dbReference type="UniPathway" id="UPA00241">
    <property type="reaction ID" value="UER00352"/>
</dbReference>
<dbReference type="Proteomes" id="UP000008825">
    <property type="component" value="Chromosome"/>
</dbReference>
<dbReference type="GO" id="GO:0005737">
    <property type="term" value="C:cytoplasm"/>
    <property type="evidence" value="ECO:0007669"/>
    <property type="project" value="UniProtKB-SubCell"/>
</dbReference>
<dbReference type="GO" id="GO:0005524">
    <property type="term" value="F:ATP binding"/>
    <property type="evidence" value="ECO:0007669"/>
    <property type="project" value="UniProtKB-UniRule"/>
</dbReference>
<dbReference type="GO" id="GO:0046872">
    <property type="term" value="F:metal ion binding"/>
    <property type="evidence" value="ECO:0007669"/>
    <property type="project" value="UniProtKB-KW"/>
</dbReference>
<dbReference type="GO" id="GO:0004594">
    <property type="term" value="F:pantothenate kinase activity"/>
    <property type="evidence" value="ECO:0007669"/>
    <property type="project" value="UniProtKB-UniRule"/>
</dbReference>
<dbReference type="GO" id="GO:0015937">
    <property type="term" value="P:coenzyme A biosynthetic process"/>
    <property type="evidence" value="ECO:0007669"/>
    <property type="project" value="UniProtKB-UniRule"/>
</dbReference>
<dbReference type="CDD" id="cd24015">
    <property type="entry name" value="ASKHA_NBD_PanK-III"/>
    <property type="match status" value="1"/>
</dbReference>
<dbReference type="Gene3D" id="3.30.420.40">
    <property type="match status" value="2"/>
</dbReference>
<dbReference type="HAMAP" id="MF_01274">
    <property type="entry name" value="Pantothen_kinase_3"/>
    <property type="match status" value="1"/>
</dbReference>
<dbReference type="InterPro" id="IPR043129">
    <property type="entry name" value="ATPase_NBD"/>
</dbReference>
<dbReference type="InterPro" id="IPR004619">
    <property type="entry name" value="Type_III_PanK"/>
</dbReference>
<dbReference type="NCBIfam" id="TIGR00671">
    <property type="entry name" value="baf"/>
    <property type="match status" value="1"/>
</dbReference>
<dbReference type="NCBIfam" id="NF009847">
    <property type="entry name" value="PRK13318.1-5"/>
    <property type="match status" value="1"/>
</dbReference>
<dbReference type="NCBIfam" id="NF009848">
    <property type="entry name" value="PRK13318.1-6"/>
    <property type="match status" value="1"/>
</dbReference>
<dbReference type="NCBIfam" id="NF009855">
    <property type="entry name" value="PRK13321.1"/>
    <property type="match status" value="1"/>
</dbReference>
<dbReference type="PANTHER" id="PTHR34265">
    <property type="entry name" value="TYPE III PANTOTHENATE KINASE"/>
    <property type="match status" value="1"/>
</dbReference>
<dbReference type="PANTHER" id="PTHR34265:SF1">
    <property type="entry name" value="TYPE III PANTOTHENATE KINASE"/>
    <property type="match status" value="1"/>
</dbReference>
<dbReference type="Pfam" id="PF03309">
    <property type="entry name" value="Pan_kinase"/>
    <property type="match status" value="1"/>
</dbReference>
<dbReference type="SUPFAM" id="SSF53067">
    <property type="entry name" value="Actin-like ATPase domain"/>
    <property type="match status" value="2"/>
</dbReference>
<organism>
    <name type="scientific">Citrifermentans bemidjiense (strain ATCC BAA-1014 / DSM 16622 / JCM 12645 / Bem)</name>
    <name type="common">Geobacter bemidjiensis</name>
    <dbReference type="NCBI Taxonomy" id="404380"/>
    <lineage>
        <taxon>Bacteria</taxon>
        <taxon>Pseudomonadati</taxon>
        <taxon>Thermodesulfobacteriota</taxon>
        <taxon>Desulfuromonadia</taxon>
        <taxon>Geobacterales</taxon>
        <taxon>Geobacteraceae</taxon>
        <taxon>Citrifermentans</taxon>
    </lineage>
</organism>
<keyword id="KW-0067">ATP-binding</keyword>
<keyword id="KW-0173">Coenzyme A biosynthesis</keyword>
<keyword id="KW-0963">Cytoplasm</keyword>
<keyword id="KW-0418">Kinase</keyword>
<keyword id="KW-0479">Metal-binding</keyword>
<keyword id="KW-0547">Nucleotide-binding</keyword>
<keyword id="KW-0630">Potassium</keyword>
<keyword id="KW-1185">Reference proteome</keyword>
<keyword id="KW-0808">Transferase</keyword>
<protein>
    <recommendedName>
        <fullName evidence="1">Type III pantothenate kinase</fullName>
        <ecNumber evidence="1">2.7.1.33</ecNumber>
    </recommendedName>
    <alternativeName>
        <fullName evidence="1">PanK-III</fullName>
    </alternativeName>
    <alternativeName>
        <fullName evidence="1">Pantothenic acid kinase</fullName>
    </alternativeName>
</protein>
<sequence length="254" mass="27937">MLLVIDVGNSNIVLGIYDEERLVRDWRVSTDKSKTIDEYGILFHDLFRLADIVFTDVKDIIISSVVPTLTGVLEKLSRQYFKISPYVVGPGIKTGMPIHYDNPKEVGADRIVNAIAGFEKYRTALIIVDFGTATTFDYVNKKGEYCGGAIAPGLAISMEALFMKASKLPRVDIARPPSIIAKNTVNSMQAGIFFGYVGLVDGIVQRMKGEGKENPKVIATGGLASLIAPESVTIEEVDEFLTLEGLRIIYQRNK</sequence>
<name>COAX_CITBB</name>
<proteinExistence type="inferred from homology"/>
<comment type="function">
    <text evidence="1">Catalyzes the phosphorylation of pantothenate (Pan), the first step in CoA biosynthesis.</text>
</comment>
<comment type="catalytic activity">
    <reaction evidence="1">
        <text>(R)-pantothenate + ATP = (R)-4'-phosphopantothenate + ADP + H(+)</text>
        <dbReference type="Rhea" id="RHEA:16373"/>
        <dbReference type="ChEBI" id="CHEBI:10986"/>
        <dbReference type="ChEBI" id="CHEBI:15378"/>
        <dbReference type="ChEBI" id="CHEBI:29032"/>
        <dbReference type="ChEBI" id="CHEBI:30616"/>
        <dbReference type="ChEBI" id="CHEBI:456216"/>
        <dbReference type="EC" id="2.7.1.33"/>
    </reaction>
</comment>
<comment type="cofactor">
    <cofactor evidence="1">
        <name>NH4(+)</name>
        <dbReference type="ChEBI" id="CHEBI:28938"/>
    </cofactor>
    <cofactor evidence="1">
        <name>K(+)</name>
        <dbReference type="ChEBI" id="CHEBI:29103"/>
    </cofactor>
    <text evidence="1">A monovalent cation. Ammonium or potassium.</text>
</comment>
<comment type="pathway">
    <text evidence="1">Cofactor biosynthesis; coenzyme A biosynthesis; CoA from (R)-pantothenate: step 1/5.</text>
</comment>
<comment type="subunit">
    <text evidence="1">Homodimer.</text>
</comment>
<comment type="subcellular location">
    <subcellularLocation>
        <location evidence="1">Cytoplasm</location>
    </subcellularLocation>
</comment>
<comment type="similarity">
    <text evidence="1">Belongs to the type III pantothenate kinase family.</text>
</comment>
<accession>B5EF22</accession>
<reference key="1">
    <citation type="submission" date="2008-07" db="EMBL/GenBank/DDBJ databases">
        <title>Complete sequence of Geobacter bemidjiensis BEM.</title>
        <authorList>
            <consortium name="US DOE Joint Genome Institute"/>
            <person name="Lucas S."/>
            <person name="Copeland A."/>
            <person name="Lapidus A."/>
            <person name="Glavina del Rio T."/>
            <person name="Dalin E."/>
            <person name="Tice H."/>
            <person name="Bruce D."/>
            <person name="Goodwin L."/>
            <person name="Pitluck S."/>
            <person name="Kiss H."/>
            <person name="Brettin T."/>
            <person name="Detter J.C."/>
            <person name="Han C."/>
            <person name="Kuske C.R."/>
            <person name="Schmutz J."/>
            <person name="Larimer F."/>
            <person name="Land M."/>
            <person name="Hauser L."/>
            <person name="Kyrpides N."/>
            <person name="Lykidis A."/>
            <person name="Lovley D."/>
            <person name="Richardson P."/>
        </authorList>
    </citation>
    <scope>NUCLEOTIDE SEQUENCE [LARGE SCALE GENOMIC DNA]</scope>
    <source>
        <strain>ATCC BAA-1014 / DSM 16622 / JCM 12645 / Bem</strain>
    </source>
</reference>